<accession>Q9PGJ2</accession>
<keyword id="KW-0997">Cell inner membrane</keyword>
<keyword id="KW-1003">Cell membrane</keyword>
<keyword id="KW-0472">Membrane</keyword>
<keyword id="KW-0520">NAD</keyword>
<keyword id="KW-0874">Quinone</keyword>
<keyword id="KW-1278">Translocase</keyword>
<keyword id="KW-0813">Transport</keyword>
<keyword id="KW-0830">Ubiquinone</keyword>
<reference key="1">
    <citation type="journal article" date="2000" name="Nature">
        <title>The genome sequence of the plant pathogen Xylella fastidiosa.</title>
        <authorList>
            <person name="Simpson A.J.G."/>
            <person name="Reinach F.C."/>
            <person name="Arruda P."/>
            <person name="Abreu F.A."/>
            <person name="Acencio M."/>
            <person name="Alvarenga R."/>
            <person name="Alves L.M.C."/>
            <person name="Araya J.E."/>
            <person name="Baia G.S."/>
            <person name="Baptista C.S."/>
            <person name="Barros M.H."/>
            <person name="Bonaccorsi E.D."/>
            <person name="Bordin S."/>
            <person name="Bove J.M."/>
            <person name="Briones M.R.S."/>
            <person name="Bueno M.R.P."/>
            <person name="Camargo A.A."/>
            <person name="Camargo L.E.A."/>
            <person name="Carraro D.M."/>
            <person name="Carrer H."/>
            <person name="Colauto N.B."/>
            <person name="Colombo C."/>
            <person name="Costa F.F."/>
            <person name="Costa M.C.R."/>
            <person name="Costa-Neto C.M."/>
            <person name="Coutinho L.L."/>
            <person name="Cristofani M."/>
            <person name="Dias-Neto E."/>
            <person name="Docena C."/>
            <person name="El-Dorry H."/>
            <person name="Facincani A.P."/>
            <person name="Ferreira A.J.S."/>
            <person name="Ferreira V.C.A."/>
            <person name="Ferro J.A."/>
            <person name="Fraga J.S."/>
            <person name="Franca S.C."/>
            <person name="Franco M.C."/>
            <person name="Frohme M."/>
            <person name="Furlan L.R."/>
            <person name="Garnier M."/>
            <person name="Goldman G.H."/>
            <person name="Goldman M.H.S."/>
            <person name="Gomes S.L."/>
            <person name="Gruber A."/>
            <person name="Ho P.L."/>
            <person name="Hoheisel J.D."/>
            <person name="Junqueira M.L."/>
            <person name="Kemper E.L."/>
            <person name="Kitajima J.P."/>
            <person name="Krieger J.E."/>
            <person name="Kuramae E.E."/>
            <person name="Laigret F."/>
            <person name="Lambais M.R."/>
            <person name="Leite L.C.C."/>
            <person name="Lemos E.G.M."/>
            <person name="Lemos M.V.F."/>
            <person name="Lopes S.A."/>
            <person name="Lopes C.R."/>
            <person name="Machado J.A."/>
            <person name="Machado M.A."/>
            <person name="Madeira A.M.B.N."/>
            <person name="Madeira H.M.F."/>
            <person name="Marino C.L."/>
            <person name="Marques M.V."/>
            <person name="Martins E.A.L."/>
            <person name="Martins E.M.F."/>
            <person name="Matsukuma A.Y."/>
            <person name="Menck C.F.M."/>
            <person name="Miracca E.C."/>
            <person name="Miyaki C.Y."/>
            <person name="Monteiro-Vitorello C.B."/>
            <person name="Moon D.H."/>
            <person name="Nagai M.A."/>
            <person name="Nascimento A.L.T.O."/>
            <person name="Netto L.E.S."/>
            <person name="Nhani A. Jr."/>
            <person name="Nobrega F.G."/>
            <person name="Nunes L.R."/>
            <person name="Oliveira M.A."/>
            <person name="de Oliveira M.C."/>
            <person name="de Oliveira R.C."/>
            <person name="Palmieri D.A."/>
            <person name="Paris A."/>
            <person name="Peixoto B.R."/>
            <person name="Pereira G.A.G."/>
            <person name="Pereira H.A. Jr."/>
            <person name="Pesquero J.B."/>
            <person name="Quaggio R.B."/>
            <person name="Roberto P.G."/>
            <person name="Rodrigues V."/>
            <person name="de Rosa A.J.M."/>
            <person name="de Rosa V.E. Jr."/>
            <person name="de Sa R.G."/>
            <person name="Santelli R.V."/>
            <person name="Sawasaki H.E."/>
            <person name="da Silva A.C.R."/>
            <person name="da Silva A.M."/>
            <person name="da Silva F.R."/>
            <person name="Silva W.A. Jr."/>
            <person name="da Silveira J.F."/>
            <person name="Silvestri M.L.Z."/>
            <person name="Siqueira W.J."/>
            <person name="de Souza A.A."/>
            <person name="de Souza A.P."/>
            <person name="Terenzi M.F."/>
            <person name="Truffi D."/>
            <person name="Tsai S.M."/>
            <person name="Tsuhako M.H."/>
            <person name="Vallada H."/>
            <person name="Van Sluys M.A."/>
            <person name="Verjovski-Almeida S."/>
            <person name="Vettore A.L."/>
            <person name="Zago M.A."/>
            <person name="Zatz M."/>
            <person name="Meidanis J."/>
            <person name="Setubal J.C."/>
        </authorList>
    </citation>
    <scope>NUCLEOTIDE SEQUENCE [LARGE SCALE GENOMIC DNA]</scope>
    <source>
        <strain>9a5c</strain>
    </source>
</reference>
<evidence type="ECO:0000255" key="1">
    <source>
        <dbReference type="HAMAP-Rule" id="MF_01358"/>
    </source>
</evidence>
<organism>
    <name type="scientific">Xylella fastidiosa (strain 9a5c)</name>
    <dbReference type="NCBI Taxonomy" id="160492"/>
    <lineage>
        <taxon>Bacteria</taxon>
        <taxon>Pseudomonadati</taxon>
        <taxon>Pseudomonadota</taxon>
        <taxon>Gammaproteobacteria</taxon>
        <taxon>Lysobacterales</taxon>
        <taxon>Lysobacteraceae</taxon>
        <taxon>Xylella</taxon>
    </lineage>
</organism>
<name>NUOD_XYLFA</name>
<gene>
    <name evidence="1" type="primary">nuoD</name>
    <name type="ordered locus">XF_0308</name>
</gene>
<dbReference type="EC" id="7.1.1.-" evidence="1"/>
<dbReference type="EMBL" id="AE003849">
    <property type="protein sequence ID" value="AAF83119.1"/>
    <property type="molecule type" value="Genomic_DNA"/>
</dbReference>
<dbReference type="PIR" id="F82821">
    <property type="entry name" value="F82821"/>
</dbReference>
<dbReference type="SMR" id="Q9PGJ2"/>
<dbReference type="STRING" id="160492.XF_0308"/>
<dbReference type="KEGG" id="xfa:XF_0308"/>
<dbReference type="PATRIC" id="fig|160492.11.peg.336"/>
<dbReference type="eggNOG" id="COG0649">
    <property type="taxonomic scope" value="Bacteria"/>
</dbReference>
<dbReference type="HOGENOM" id="CLU_015134_1_1_6"/>
<dbReference type="Proteomes" id="UP000000812">
    <property type="component" value="Chromosome"/>
</dbReference>
<dbReference type="GO" id="GO:0005886">
    <property type="term" value="C:plasma membrane"/>
    <property type="evidence" value="ECO:0007669"/>
    <property type="project" value="UniProtKB-SubCell"/>
</dbReference>
<dbReference type="GO" id="GO:0051287">
    <property type="term" value="F:NAD binding"/>
    <property type="evidence" value="ECO:0007669"/>
    <property type="project" value="InterPro"/>
</dbReference>
<dbReference type="GO" id="GO:0050136">
    <property type="term" value="F:NADH:ubiquinone reductase (non-electrogenic) activity"/>
    <property type="evidence" value="ECO:0007669"/>
    <property type="project" value="UniProtKB-UniRule"/>
</dbReference>
<dbReference type="GO" id="GO:0048038">
    <property type="term" value="F:quinone binding"/>
    <property type="evidence" value="ECO:0007669"/>
    <property type="project" value="UniProtKB-KW"/>
</dbReference>
<dbReference type="FunFam" id="1.10.645.10:FF:000005">
    <property type="entry name" value="NADH-quinone oxidoreductase subunit D"/>
    <property type="match status" value="1"/>
</dbReference>
<dbReference type="Gene3D" id="1.10.645.10">
    <property type="entry name" value="Cytochrome-c3 Hydrogenase, chain B"/>
    <property type="match status" value="1"/>
</dbReference>
<dbReference type="HAMAP" id="MF_01358">
    <property type="entry name" value="NDH1_NuoD"/>
    <property type="match status" value="1"/>
</dbReference>
<dbReference type="InterPro" id="IPR001135">
    <property type="entry name" value="NADH_Q_OxRdtase_suD"/>
</dbReference>
<dbReference type="InterPro" id="IPR014029">
    <property type="entry name" value="NADH_UbQ_OxRdtase_49kDa_CS"/>
</dbReference>
<dbReference type="InterPro" id="IPR022885">
    <property type="entry name" value="NDH1_su_D/H"/>
</dbReference>
<dbReference type="InterPro" id="IPR029014">
    <property type="entry name" value="NiFe-Hase_large"/>
</dbReference>
<dbReference type="NCBIfam" id="TIGR01962">
    <property type="entry name" value="NuoD"/>
    <property type="match status" value="1"/>
</dbReference>
<dbReference type="NCBIfam" id="NF004739">
    <property type="entry name" value="PRK06075.1"/>
    <property type="match status" value="1"/>
</dbReference>
<dbReference type="PANTHER" id="PTHR11993:SF10">
    <property type="entry name" value="NADH DEHYDROGENASE [UBIQUINONE] IRON-SULFUR PROTEIN 2, MITOCHONDRIAL"/>
    <property type="match status" value="1"/>
</dbReference>
<dbReference type="PANTHER" id="PTHR11993">
    <property type="entry name" value="NADH-UBIQUINONE OXIDOREDUCTASE 49 KDA SUBUNIT"/>
    <property type="match status" value="1"/>
</dbReference>
<dbReference type="Pfam" id="PF00346">
    <property type="entry name" value="Complex1_49kDa"/>
    <property type="match status" value="1"/>
</dbReference>
<dbReference type="SUPFAM" id="SSF56762">
    <property type="entry name" value="HydB/Nqo4-like"/>
    <property type="match status" value="1"/>
</dbReference>
<dbReference type="PROSITE" id="PS00535">
    <property type="entry name" value="COMPLEX1_49K"/>
    <property type="match status" value="1"/>
</dbReference>
<sequence>MNQIRQAPATSASNATESKQEIRNYTMNFGPQHPAAHGVLRLILEMDGETVVRADPHIGLLHRGTEKLAESKPFNQSIGYMDRLDYVSMMCNEHAYVRAIETLIGIQAPERAQYIRTMFDEITRILNHLMWLGSNALDLGAMAVMLYAFREREELMDVYEAISGARMHAAYYRPGGVYRDLPDTMPKYKQSRWHKGKALKRLNAAREGSMLDFLEHFADTFPQRIDEYETLLTDNRIWKQRTVGVGVIEPDVAKAWGMTGVMLRGSGVAWDLRKKQPYAKYDAVDFDIPLGTCGDCYDRYLCRVAEMRESNRIIKQCVQWLKVNPGQVMVENFKVAPPKRESMKDDMEALIHHFKLFSEGYCVPAGETYSAVEAPKGEFGCYLISDGANKPFRVHLRAPGFAHLSSMDAVVRGYMLADVVAMIGTYDLVFGEVDR</sequence>
<feature type="chain" id="PRO_0000371953" description="NADH-quinone oxidoreductase subunit D">
    <location>
        <begin position="1"/>
        <end position="435"/>
    </location>
</feature>
<protein>
    <recommendedName>
        <fullName evidence="1">NADH-quinone oxidoreductase subunit D</fullName>
        <ecNumber evidence="1">7.1.1.-</ecNumber>
    </recommendedName>
    <alternativeName>
        <fullName evidence="1">NADH dehydrogenase I subunit D</fullName>
    </alternativeName>
    <alternativeName>
        <fullName evidence="1">NDH-1 subunit D</fullName>
    </alternativeName>
</protein>
<proteinExistence type="inferred from homology"/>
<comment type="function">
    <text evidence="1">NDH-1 shuttles electrons from NADH, via FMN and iron-sulfur (Fe-S) centers, to quinones in the respiratory chain. The immediate electron acceptor for the enzyme in this species is believed to be ubiquinone. Couples the redox reaction to proton translocation (for every two electrons transferred, four hydrogen ions are translocated across the cytoplasmic membrane), and thus conserves the redox energy in a proton gradient.</text>
</comment>
<comment type="catalytic activity">
    <reaction evidence="1">
        <text>a quinone + NADH + 5 H(+)(in) = a quinol + NAD(+) + 4 H(+)(out)</text>
        <dbReference type="Rhea" id="RHEA:57888"/>
        <dbReference type="ChEBI" id="CHEBI:15378"/>
        <dbReference type="ChEBI" id="CHEBI:24646"/>
        <dbReference type="ChEBI" id="CHEBI:57540"/>
        <dbReference type="ChEBI" id="CHEBI:57945"/>
        <dbReference type="ChEBI" id="CHEBI:132124"/>
    </reaction>
</comment>
<comment type="subunit">
    <text evidence="1">NDH-1 is composed of 14 different subunits. Subunits NuoB, C, D, E, F, and G constitute the peripheral sector of the complex.</text>
</comment>
<comment type="subcellular location">
    <subcellularLocation>
        <location evidence="1">Cell inner membrane</location>
        <topology evidence="1">Peripheral membrane protein</topology>
        <orientation evidence="1">Cytoplasmic side</orientation>
    </subcellularLocation>
</comment>
<comment type="similarity">
    <text evidence="1">Belongs to the complex I 49 kDa subunit family.</text>
</comment>